<dbReference type="EC" id="2.7.7.8" evidence="1"/>
<dbReference type="EMBL" id="CP000919">
    <property type="protein sequence ID" value="ACO19587.1"/>
    <property type="molecule type" value="Genomic_DNA"/>
</dbReference>
<dbReference type="RefSeq" id="WP_012677058.1">
    <property type="nucleotide sequence ID" value="NC_012466.1"/>
</dbReference>
<dbReference type="SMR" id="C1CCW4"/>
<dbReference type="KEGG" id="sjj:SPJ_0542"/>
<dbReference type="HOGENOM" id="CLU_004217_2_2_9"/>
<dbReference type="Proteomes" id="UP000002206">
    <property type="component" value="Chromosome"/>
</dbReference>
<dbReference type="GO" id="GO:0005829">
    <property type="term" value="C:cytosol"/>
    <property type="evidence" value="ECO:0007669"/>
    <property type="project" value="TreeGrafter"/>
</dbReference>
<dbReference type="GO" id="GO:0000175">
    <property type="term" value="F:3'-5'-RNA exonuclease activity"/>
    <property type="evidence" value="ECO:0007669"/>
    <property type="project" value="TreeGrafter"/>
</dbReference>
<dbReference type="GO" id="GO:0000287">
    <property type="term" value="F:magnesium ion binding"/>
    <property type="evidence" value="ECO:0007669"/>
    <property type="project" value="UniProtKB-UniRule"/>
</dbReference>
<dbReference type="GO" id="GO:0004654">
    <property type="term" value="F:polyribonucleotide nucleotidyltransferase activity"/>
    <property type="evidence" value="ECO:0007669"/>
    <property type="project" value="UniProtKB-UniRule"/>
</dbReference>
<dbReference type="GO" id="GO:0003723">
    <property type="term" value="F:RNA binding"/>
    <property type="evidence" value="ECO:0007669"/>
    <property type="project" value="UniProtKB-UniRule"/>
</dbReference>
<dbReference type="GO" id="GO:0006402">
    <property type="term" value="P:mRNA catabolic process"/>
    <property type="evidence" value="ECO:0007669"/>
    <property type="project" value="UniProtKB-UniRule"/>
</dbReference>
<dbReference type="GO" id="GO:0006396">
    <property type="term" value="P:RNA processing"/>
    <property type="evidence" value="ECO:0007669"/>
    <property type="project" value="InterPro"/>
</dbReference>
<dbReference type="CDD" id="cd02393">
    <property type="entry name" value="KH-I_PNPase"/>
    <property type="match status" value="1"/>
</dbReference>
<dbReference type="CDD" id="cd11363">
    <property type="entry name" value="RNase_PH_PNPase_1"/>
    <property type="match status" value="1"/>
</dbReference>
<dbReference type="CDD" id="cd11364">
    <property type="entry name" value="RNase_PH_PNPase_2"/>
    <property type="match status" value="1"/>
</dbReference>
<dbReference type="FunFam" id="2.40.50.140:FF:000023">
    <property type="entry name" value="Polyribonucleotide nucleotidyltransferase"/>
    <property type="match status" value="1"/>
</dbReference>
<dbReference type="FunFam" id="3.30.1370.10:FF:000001">
    <property type="entry name" value="Polyribonucleotide nucleotidyltransferase"/>
    <property type="match status" value="1"/>
</dbReference>
<dbReference type="FunFam" id="3.30.230.70:FF:000001">
    <property type="entry name" value="Polyribonucleotide nucleotidyltransferase"/>
    <property type="match status" value="1"/>
</dbReference>
<dbReference type="FunFam" id="3.30.230.70:FF:000002">
    <property type="entry name" value="Polyribonucleotide nucleotidyltransferase"/>
    <property type="match status" value="1"/>
</dbReference>
<dbReference type="Gene3D" id="3.30.230.70">
    <property type="entry name" value="GHMP Kinase, N-terminal domain"/>
    <property type="match status" value="2"/>
</dbReference>
<dbReference type="Gene3D" id="3.30.1370.10">
    <property type="entry name" value="K Homology domain, type 1"/>
    <property type="match status" value="1"/>
</dbReference>
<dbReference type="Gene3D" id="2.40.50.140">
    <property type="entry name" value="Nucleic acid-binding proteins"/>
    <property type="match status" value="1"/>
</dbReference>
<dbReference type="HAMAP" id="MF_01595">
    <property type="entry name" value="PNPase"/>
    <property type="match status" value="1"/>
</dbReference>
<dbReference type="InterPro" id="IPR001247">
    <property type="entry name" value="ExoRNase_PH_dom1"/>
</dbReference>
<dbReference type="InterPro" id="IPR015847">
    <property type="entry name" value="ExoRNase_PH_dom2"/>
</dbReference>
<dbReference type="InterPro" id="IPR036345">
    <property type="entry name" value="ExoRNase_PH_dom2_sf"/>
</dbReference>
<dbReference type="InterPro" id="IPR004087">
    <property type="entry name" value="KH_dom"/>
</dbReference>
<dbReference type="InterPro" id="IPR004088">
    <property type="entry name" value="KH_dom_type_1"/>
</dbReference>
<dbReference type="InterPro" id="IPR036612">
    <property type="entry name" value="KH_dom_type_1_sf"/>
</dbReference>
<dbReference type="InterPro" id="IPR012340">
    <property type="entry name" value="NA-bd_OB-fold"/>
</dbReference>
<dbReference type="InterPro" id="IPR012162">
    <property type="entry name" value="PNPase"/>
</dbReference>
<dbReference type="InterPro" id="IPR027408">
    <property type="entry name" value="PNPase/RNase_PH_dom_sf"/>
</dbReference>
<dbReference type="InterPro" id="IPR015848">
    <property type="entry name" value="PNPase_PH_RNA-bd_bac/org-type"/>
</dbReference>
<dbReference type="InterPro" id="IPR036456">
    <property type="entry name" value="PNPase_PH_RNA-bd_sf"/>
</dbReference>
<dbReference type="InterPro" id="IPR020568">
    <property type="entry name" value="Ribosomal_Su5_D2-typ_SF"/>
</dbReference>
<dbReference type="InterPro" id="IPR003029">
    <property type="entry name" value="S1_domain"/>
</dbReference>
<dbReference type="NCBIfam" id="TIGR03591">
    <property type="entry name" value="polynuc_phos"/>
    <property type="match status" value="1"/>
</dbReference>
<dbReference type="NCBIfam" id="NF008805">
    <property type="entry name" value="PRK11824.1"/>
    <property type="match status" value="1"/>
</dbReference>
<dbReference type="PANTHER" id="PTHR11252">
    <property type="entry name" value="POLYRIBONUCLEOTIDE NUCLEOTIDYLTRANSFERASE"/>
    <property type="match status" value="1"/>
</dbReference>
<dbReference type="PANTHER" id="PTHR11252:SF0">
    <property type="entry name" value="POLYRIBONUCLEOTIDE NUCLEOTIDYLTRANSFERASE 1, MITOCHONDRIAL"/>
    <property type="match status" value="1"/>
</dbReference>
<dbReference type="Pfam" id="PF00013">
    <property type="entry name" value="KH_1"/>
    <property type="match status" value="1"/>
</dbReference>
<dbReference type="Pfam" id="PF03726">
    <property type="entry name" value="PNPase"/>
    <property type="match status" value="1"/>
</dbReference>
<dbReference type="Pfam" id="PF01138">
    <property type="entry name" value="RNase_PH"/>
    <property type="match status" value="2"/>
</dbReference>
<dbReference type="Pfam" id="PF03725">
    <property type="entry name" value="RNase_PH_C"/>
    <property type="match status" value="2"/>
</dbReference>
<dbReference type="Pfam" id="PF00575">
    <property type="entry name" value="S1"/>
    <property type="match status" value="1"/>
</dbReference>
<dbReference type="PIRSF" id="PIRSF005499">
    <property type="entry name" value="PNPase"/>
    <property type="match status" value="1"/>
</dbReference>
<dbReference type="SMART" id="SM00322">
    <property type="entry name" value="KH"/>
    <property type="match status" value="1"/>
</dbReference>
<dbReference type="SMART" id="SM00316">
    <property type="entry name" value="S1"/>
    <property type="match status" value="1"/>
</dbReference>
<dbReference type="SUPFAM" id="SSF54791">
    <property type="entry name" value="Eukaryotic type KH-domain (KH-domain type I)"/>
    <property type="match status" value="1"/>
</dbReference>
<dbReference type="SUPFAM" id="SSF50249">
    <property type="entry name" value="Nucleic acid-binding proteins"/>
    <property type="match status" value="1"/>
</dbReference>
<dbReference type="SUPFAM" id="SSF46915">
    <property type="entry name" value="Polynucleotide phosphorylase/guanosine pentaphosphate synthase (PNPase/GPSI), domain 3"/>
    <property type="match status" value="1"/>
</dbReference>
<dbReference type="SUPFAM" id="SSF55666">
    <property type="entry name" value="Ribonuclease PH domain 2-like"/>
    <property type="match status" value="2"/>
</dbReference>
<dbReference type="SUPFAM" id="SSF54211">
    <property type="entry name" value="Ribosomal protein S5 domain 2-like"/>
    <property type="match status" value="2"/>
</dbReference>
<dbReference type="PROSITE" id="PS50084">
    <property type="entry name" value="KH_TYPE_1"/>
    <property type="match status" value="1"/>
</dbReference>
<dbReference type="PROSITE" id="PS50126">
    <property type="entry name" value="S1"/>
    <property type="match status" value="1"/>
</dbReference>
<name>PNP_STRZJ</name>
<organism>
    <name type="scientific">Streptococcus pneumoniae (strain JJA)</name>
    <dbReference type="NCBI Taxonomy" id="488222"/>
    <lineage>
        <taxon>Bacteria</taxon>
        <taxon>Bacillati</taxon>
        <taxon>Bacillota</taxon>
        <taxon>Bacilli</taxon>
        <taxon>Lactobacillales</taxon>
        <taxon>Streptococcaceae</taxon>
        <taxon>Streptococcus</taxon>
    </lineage>
</organism>
<evidence type="ECO:0000255" key="1">
    <source>
        <dbReference type="HAMAP-Rule" id="MF_01595"/>
    </source>
</evidence>
<evidence type="ECO:0000256" key="2">
    <source>
        <dbReference type="SAM" id="MobiDB-lite"/>
    </source>
</evidence>
<gene>
    <name evidence="1" type="primary">pnp</name>
    <name type="ordered locus">SPJ_0542</name>
</gene>
<reference key="1">
    <citation type="journal article" date="2010" name="Genome Biol.">
        <title>Structure and dynamics of the pan-genome of Streptococcus pneumoniae and closely related species.</title>
        <authorList>
            <person name="Donati C."/>
            <person name="Hiller N.L."/>
            <person name="Tettelin H."/>
            <person name="Muzzi A."/>
            <person name="Croucher N.J."/>
            <person name="Angiuoli S.V."/>
            <person name="Oggioni M."/>
            <person name="Dunning Hotopp J.C."/>
            <person name="Hu F.Z."/>
            <person name="Riley D.R."/>
            <person name="Covacci A."/>
            <person name="Mitchell T.J."/>
            <person name="Bentley S.D."/>
            <person name="Kilian M."/>
            <person name="Ehrlich G.D."/>
            <person name="Rappuoli R."/>
            <person name="Moxon E.R."/>
            <person name="Masignani V."/>
        </authorList>
    </citation>
    <scope>NUCLEOTIDE SEQUENCE [LARGE SCALE GENOMIC DNA]</scope>
    <source>
        <strain>JJA</strain>
    </source>
</reference>
<keyword id="KW-0963">Cytoplasm</keyword>
<keyword id="KW-0460">Magnesium</keyword>
<keyword id="KW-0479">Metal-binding</keyword>
<keyword id="KW-0548">Nucleotidyltransferase</keyword>
<keyword id="KW-0694">RNA-binding</keyword>
<keyword id="KW-0808">Transferase</keyword>
<proteinExistence type="inferred from homology"/>
<protein>
    <recommendedName>
        <fullName evidence="1">Polyribonucleotide nucleotidyltransferase</fullName>
        <ecNumber evidence="1">2.7.7.8</ecNumber>
    </recommendedName>
    <alternativeName>
        <fullName evidence="1">Polynucleotide phosphorylase</fullName>
        <shortName evidence="1">PNPase</shortName>
    </alternativeName>
</protein>
<comment type="function">
    <text evidence="1">Involved in mRNA degradation. Catalyzes the phosphorolysis of single-stranded polyribonucleotides processively in the 3'- to 5'-direction.</text>
</comment>
<comment type="catalytic activity">
    <reaction evidence="1">
        <text>RNA(n+1) + phosphate = RNA(n) + a ribonucleoside 5'-diphosphate</text>
        <dbReference type="Rhea" id="RHEA:22096"/>
        <dbReference type="Rhea" id="RHEA-COMP:14527"/>
        <dbReference type="Rhea" id="RHEA-COMP:17342"/>
        <dbReference type="ChEBI" id="CHEBI:43474"/>
        <dbReference type="ChEBI" id="CHEBI:57930"/>
        <dbReference type="ChEBI" id="CHEBI:140395"/>
        <dbReference type="EC" id="2.7.7.8"/>
    </reaction>
</comment>
<comment type="cofactor">
    <cofactor evidence="1">
        <name>Mg(2+)</name>
        <dbReference type="ChEBI" id="CHEBI:18420"/>
    </cofactor>
</comment>
<comment type="subcellular location">
    <subcellularLocation>
        <location evidence="1">Cytoplasm</location>
    </subcellularLocation>
</comment>
<comment type="similarity">
    <text evidence="1">Belongs to the polyribonucleotide nucleotidyltransferase family.</text>
</comment>
<accession>C1CCW4</accession>
<feature type="chain" id="PRO_1000185756" description="Polyribonucleotide nucleotidyltransferase">
    <location>
        <begin position="1"/>
        <end position="737"/>
    </location>
</feature>
<feature type="domain" description="KH" evidence="1">
    <location>
        <begin position="556"/>
        <end position="615"/>
    </location>
</feature>
<feature type="domain" description="S1 motif" evidence="1">
    <location>
        <begin position="625"/>
        <end position="693"/>
    </location>
</feature>
<feature type="region of interest" description="Disordered" evidence="2">
    <location>
        <begin position="691"/>
        <end position="737"/>
    </location>
</feature>
<feature type="compositionally biased region" description="Basic and acidic residues" evidence="2">
    <location>
        <begin position="700"/>
        <end position="714"/>
    </location>
</feature>
<feature type="compositionally biased region" description="Basic residues" evidence="2">
    <location>
        <begin position="715"/>
        <end position="724"/>
    </location>
</feature>
<feature type="compositionally biased region" description="Basic and acidic residues" evidence="2">
    <location>
        <begin position="725"/>
        <end position="737"/>
    </location>
</feature>
<feature type="binding site" evidence="1">
    <location>
        <position position="489"/>
    </location>
    <ligand>
        <name>Mg(2+)</name>
        <dbReference type="ChEBI" id="CHEBI:18420"/>
    </ligand>
</feature>
<feature type="binding site" evidence="1">
    <location>
        <position position="495"/>
    </location>
    <ligand>
        <name>Mg(2+)</name>
        <dbReference type="ChEBI" id="CHEBI:18420"/>
    </ligand>
</feature>
<sequence length="737" mass="81036">MAKQVFQTTFAGRELIVETGQVAKQANGSVVVRYGESTVLTAAVMSKKMATGDFFPLQVNYEEKMYAAGKFPGGFMKREGRPSTDATLTARLIDRPIRPMFAEGFRNEVQVINTVLSYDENASAPMAAMFGSSLALSISDIPFDGPIAGVQVGYVDGQIIINPSQEQAEQSLLELTVAGTKHAINMVESGAKELSEEIMLEALLKGHEAVKELIAFQEEIVAAVGKEKAEVELLHVDAELQAEIIAAYNSDLQKAVQVEEKLAREAATQVVKDQVTAVYEEKYADHEEFDRIMRDVAEILEQMEHAEVRRLITEDKVRPDGRKVDEIRPLDAVVDFLPRVHGSGLFTRGQTQALSVLTLAPMGETQIIDGLDLEYKKRFMHHYNFPQYSVGETGRYGAPGRREIGHGALGERALAQVLPSLEEFPYAIRLVAEVLESNGSSSQASICAGTLALMAGGVPIKAPVAGIAMGLISDGNNYTVLTDIQGLEDHFGDMDFKVAGTRDGITALQMDIKIQGITAEILTEALAQAKKARFEILDVIEATIPEVRPELAPTAPKIDTIKIDVDKIKIVIGKGGETIDKIIAETGVKIDIDEEGNVSIYSSDQDAINRAKEIIAGLVREAKVDEVYRAKVVRIEKFGAFVNLFDKTDALVHISEMAWTRTNRVEDLVEIGDEVDVKVIKIDEKGRIDASMKALLPRPPKPEHDEKGEKSERPHRPRHQKDHKPKKEFTETPKDSE</sequence>